<name>YNFC_ECO57</name>
<evidence type="ECO:0000255" key="1">
    <source>
        <dbReference type="HAMAP-Rule" id="MF_01065"/>
    </source>
</evidence>
<evidence type="ECO:0000305" key="2"/>
<reference key="1">
    <citation type="journal article" date="2001" name="Nature">
        <title>Genome sequence of enterohaemorrhagic Escherichia coli O157:H7.</title>
        <authorList>
            <person name="Perna N.T."/>
            <person name="Plunkett G. III"/>
            <person name="Burland V."/>
            <person name="Mau B."/>
            <person name="Glasner J.D."/>
            <person name="Rose D.J."/>
            <person name="Mayhew G.F."/>
            <person name="Evans P.S."/>
            <person name="Gregor J."/>
            <person name="Kirkpatrick H.A."/>
            <person name="Posfai G."/>
            <person name="Hackett J."/>
            <person name="Klink S."/>
            <person name="Boutin A."/>
            <person name="Shao Y."/>
            <person name="Miller L."/>
            <person name="Grotbeck E.J."/>
            <person name="Davis N.W."/>
            <person name="Lim A."/>
            <person name="Dimalanta E.T."/>
            <person name="Potamousis K."/>
            <person name="Apodaca J."/>
            <person name="Anantharaman T.S."/>
            <person name="Lin J."/>
            <person name="Yen G."/>
            <person name="Schwartz D.C."/>
            <person name="Welch R.A."/>
            <person name="Blattner F.R."/>
        </authorList>
    </citation>
    <scope>NUCLEOTIDE SEQUENCE [LARGE SCALE GENOMIC DNA]</scope>
    <source>
        <strain>O157:H7 / EDL933 / ATCC 700927 / EHEC</strain>
    </source>
</reference>
<reference key="2">
    <citation type="journal article" date="2001" name="DNA Res.">
        <title>Complete genome sequence of enterohemorrhagic Escherichia coli O157:H7 and genomic comparison with a laboratory strain K-12.</title>
        <authorList>
            <person name="Hayashi T."/>
            <person name="Makino K."/>
            <person name="Ohnishi M."/>
            <person name="Kurokawa K."/>
            <person name="Ishii K."/>
            <person name="Yokoyama K."/>
            <person name="Han C.-G."/>
            <person name="Ohtsubo E."/>
            <person name="Nakayama K."/>
            <person name="Murata T."/>
            <person name="Tanaka M."/>
            <person name="Tobe T."/>
            <person name="Iida T."/>
            <person name="Takami H."/>
            <person name="Honda T."/>
            <person name="Sasakawa C."/>
            <person name="Ogasawara N."/>
            <person name="Yasunaga T."/>
            <person name="Kuhara S."/>
            <person name="Shiba T."/>
            <person name="Hattori M."/>
            <person name="Shinagawa H."/>
        </authorList>
    </citation>
    <scope>NUCLEOTIDE SEQUENCE [LARGE SCALE GENOMIC DNA]</scope>
    <source>
        <strain>O157:H7 / Sakai / RIMD 0509952 / EHEC</strain>
    </source>
</reference>
<sequence length="236" mass="26415">MKYKLLPCLLAILLTGCDRTEVTLSFTPEMASFSNEFDFDPLRGPVKDFTQTLMDEQGEVTKRVSGTLSEEGCFDSLELLDLENNTVVALVLDANYYRDAETLEKRVRLQGKCQLAELPSAGVSWETDDNGFVIKASSKQMQMEYRYDDQGYPLGKTTKSNDKTLSVSATPSTDPIKKLDYTAVTLLNNQRVGNVKQSCEYDSHANPVGCQLIIVDEGVKPAVERVYTIKNTIDYY</sequence>
<feature type="signal peptide" evidence="1">
    <location>
        <begin position="1"/>
        <end position="16"/>
    </location>
</feature>
<feature type="chain" id="PRO_0000036263" description="UPF0257 lipoprotein YnfC">
    <location>
        <begin position="17"/>
        <end position="236"/>
    </location>
</feature>
<feature type="lipid moiety-binding region" description="N-palmitoyl cysteine" evidence="1">
    <location>
        <position position="17"/>
    </location>
</feature>
<feature type="lipid moiety-binding region" description="S-diacylglycerol cysteine" evidence="1">
    <location>
        <position position="17"/>
    </location>
</feature>
<proteinExistence type="inferred from homology"/>
<comment type="subcellular location">
    <subcellularLocation>
        <location evidence="1">Cell membrane</location>
        <topology evidence="1">Lipid-anchor</topology>
    </subcellularLocation>
</comment>
<comment type="similarity">
    <text evidence="1">Belongs to the UPF0257 family.</text>
</comment>
<comment type="sequence caution" evidence="2">
    <conflict type="erroneous initiation">
        <sequence resource="EMBL-CDS" id="AAG56572"/>
    </conflict>
</comment>
<comment type="sequence caution" evidence="2">
    <conflict type="erroneous initiation">
        <sequence resource="EMBL-CDS" id="BAB35714"/>
    </conflict>
</comment>
<organism>
    <name type="scientific">Escherichia coli O157:H7</name>
    <dbReference type="NCBI Taxonomy" id="83334"/>
    <lineage>
        <taxon>Bacteria</taxon>
        <taxon>Pseudomonadati</taxon>
        <taxon>Pseudomonadota</taxon>
        <taxon>Gammaproteobacteria</taxon>
        <taxon>Enterobacterales</taxon>
        <taxon>Enterobacteriaceae</taxon>
        <taxon>Escherichia</taxon>
    </lineage>
</organism>
<gene>
    <name evidence="1" type="primary">ynfC</name>
    <name type="ordered locus">Z2572</name>
    <name type="ordered locus">ECs2291</name>
</gene>
<accession>Q8X799</accession>
<protein>
    <recommendedName>
        <fullName evidence="1">UPF0257 lipoprotein YnfC</fullName>
    </recommendedName>
</protein>
<dbReference type="EMBL" id="AE005174">
    <property type="protein sequence ID" value="AAG56572.1"/>
    <property type="status" value="ALT_INIT"/>
    <property type="molecule type" value="Genomic_DNA"/>
</dbReference>
<dbReference type="EMBL" id="BA000007">
    <property type="protein sequence ID" value="BAB35714.1"/>
    <property type="status" value="ALT_INIT"/>
    <property type="molecule type" value="Genomic_DNA"/>
</dbReference>
<dbReference type="PIR" id="C90915">
    <property type="entry name" value="C90915"/>
</dbReference>
<dbReference type="PIR" id="H85763">
    <property type="entry name" value="H85763"/>
</dbReference>
<dbReference type="RefSeq" id="NP_310318.2">
    <property type="nucleotide sequence ID" value="NC_002695.1"/>
</dbReference>
<dbReference type="RefSeq" id="WP_001303515.1">
    <property type="nucleotide sequence ID" value="NZ_VOAI01000007.1"/>
</dbReference>
<dbReference type="SMR" id="Q8X799"/>
<dbReference type="GeneID" id="912661"/>
<dbReference type="KEGG" id="ece:Z2572"/>
<dbReference type="KEGG" id="ecs:ECs_2291"/>
<dbReference type="PATRIC" id="fig|386585.9.peg.2399"/>
<dbReference type="eggNOG" id="ENOG502Z8TA">
    <property type="taxonomic scope" value="Bacteria"/>
</dbReference>
<dbReference type="HOGENOM" id="CLU_1174761_0_0_6"/>
<dbReference type="OMA" id="WDTDDNG"/>
<dbReference type="Proteomes" id="UP000000558">
    <property type="component" value="Chromosome"/>
</dbReference>
<dbReference type="Proteomes" id="UP000002519">
    <property type="component" value="Chromosome"/>
</dbReference>
<dbReference type="GO" id="GO:0005886">
    <property type="term" value="C:plasma membrane"/>
    <property type="evidence" value="ECO:0007669"/>
    <property type="project" value="UniProtKB-SubCell"/>
</dbReference>
<dbReference type="HAMAP" id="MF_01065">
    <property type="entry name" value="UPF0257"/>
    <property type="match status" value="1"/>
</dbReference>
<dbReference type="InterPro" id="IPR010646">
    <property type="entry name" value="UPF0257"/>
</dbReference>
<dbReference type="NCBIfam" id="NF002798">
    <property type="entry name" value="PRK02939.1"/>
    <property type="match status" value="1"/>
</dbReference>
<dbReference type="Pfam" id="PF06788">
    <property type="entry name" value="UPF0257"/>
    <property type="match status" value="1"/>
</dbReference>
<dbReference type="PROSITE" id="PS51257">
    <property type="entry name" value="PROKAR_LIPOPROTEIN"/>
    <property type="match status" value="1"/>
</dbReference>
<keyword id="KW-1003">Cell membrane</keyword>
<keyword id="KW-0449">Lipoprotein</keyword>
<keyword id="KW-0472">Membrane</keyword>
<keyword id="KW-0564">Palmitate</keyword>
<keyword id="KW-1185">Reference proteome</keyword>
<keyword id="KW-0732">Signal</keyword>